<gene>
    <name evidence="1" type="primary">aroB</name>
    <name type="ordered locus">SP70585_1414</name>
</gene>
<reference key="1">
    <citation type="journal article" date="2010" name="Genome Biol.">
        <title>Structure and dynamics of the pan-genome of Streptococcus pneumoniae and closely related species.</title>
        <authorList>
            <person name="Donati C."/>
            <person name="Hiller N.L."/>
            <person name="Tettelin H."/>
            <person name="Muzzi A."/>
            <person name="Croucher N.J."/>
            <person name="Angiuoli S.V."/>
            <person name="Oggioni M."/>
            <person name="Dunning Hotopp J.C."/>
            <person name="Hu F.Z."/>
            <person name="Riley D.R."/>
            <person name="Covacci A."/>
            <person name="Mitchell T.J."/>
            <person name="Bentley S.D."/>
            <person name="Kilian M."/>
            <person name="Ehrlich G.D."/>
            <person name="Rappuoli R."/>
            <person name="Moxon E.R."/>
            <person name="Masignani V."/>
        </authorList>
    </citation>
    <scope>NUCLEOTIDE SEQUENCE [LARGE SCALE GENOMIC DNA]</scope>
    <source>
        <strain>70585</strain>
    </source>
</reference>
<feature type="chain" id="PRO_1000119093" description="3-dehydroquinate synthase">
    <location>
        <begin position="1"/>
        <end position="355"/>
    </location>
</feature>
<feature type="binding site" evidence="1">
    <location>
        <begin position="71"/>
        <end position="76"/>
    </location>
    <ligand>
        <name>NAD(+)</name>
        <dbReference type="ChEBI" id="CHEBI:57540"/>
    </ligand>
</feature>
<feature type="binding site" evidence="1">
    <location>
        <begin position="105"/>
        <end position="109"/>
    </location>
    <ligand>
        <name>NAD(+)</name>
        <dbReference type="ChEBI" id="CHEBI:57540"/>
    </ligand>
</feature>
<feature type="binding site" evidence="1">
    <location>
        <begin position="129"/>
        <end position="130"/>
    </location>
    <ligand>
        <name>NAD(+)</name>
        <dbReference type="ChEBI" id="CHEBI:57540"/>
    </ligand>
</feature>
<feature type="binding site" evidence="1">
    <location>
        <position position="142"/>
    </location>
    <ligand>
        <name>NAD(+)</name>
        <dbReference type="ChEBI" id="CHEBI:57540"/>
    </ligand>
</feature>
<feature type="binding site" evidence="1">
    <location>
        <position position="151"/>
    </location>
    <ligand>
        <name>NAD(+)</name>
        <dbReference type="ChEBI" id="CHEBI:57540"/>
    </ligand>
</feature>
<feature type="binding site" evidence="1">
    <location>
        <position position="184"/>
    </location>
    <ligand>
        <name>Zn(2+)</name>
        <dbReference type="ChEBI" id="CHEBI:29105"/>
    </ligand>
</feature>
<feature type="binding site" evidence="1">
    <location>
        <position position="246"/>
    </location>
    <ligand>
        <name>Zn(2+)</name>
        <dbReference type="ChEBI" id="CHEBI:29105"/>
    </ligand>
</feature>
<feature type="binding site" evidence="1">
    <location>
        <position position="263"/>
    </location>
    <ligand>
        <name>Zn(2+)</name>
        <dbReference type="ChEBI" id="CHEBI:29105"/>
    </ligand>
</feature>
<sequence length="355" mass="39028">MKIRIDIPHHPYDIQIEKGCMAQAGQWLRELWQPQKVVIVTDNHVASLYAEKVKLSLEDAGFQVAVFDFLEGEERKNLTTVQKVYEFLVKQGLTRSDGIVALGGGVVGDLAGFVASTYMRGIHFVQIPTSLTAQVDSSIGGKTGVNTPFAKNMVGTFAQPDGVLIDPLVLETLGKRELIEGMGEVIKYGLIEDPELWALLTGLNGSVESILEHAETLIEHSCQVKRKMVVEDELDNGIRLYLNFGHTIGHAIEATAGYGKVMHGEAVAMGMVQISKVAEEKGLMPAGITQSITEMCQKFGLPVDYENWEVDKLYQALTHDKKARGNTLKLVLVPELGSAIIHPVSLEEMKDYLVK</sequence>
<organism>
    <name type="scientific">Streptococcus pneumoniae (strain 70585)</name>
    <dbReference type="NCBI Taxonomy" id="488221"/>
    <lineage>
        <taxon>Bacteria</taxon>
        <taxon>Bacillati</taxon>
        <taxon>Bacillota</taxon>
        <taxon>Bacilli</taxon>
        <taxon>Lactobacillales</taxon>
        <taxon>Streptococcaceae</taxon>
        <taxon>Streptococcus</taxon>
    </lineage>
</organism>
<comment type="function">
    <text evidence="1">Catalyzes the conversion of 3-deoxy-D-arabino-heptulosonate 7-phosphate (DAHP) to dehydroquinate (DHQ).</text>
</comment>
<comment type="catalytic activity">
    <reaction evidence="1">
        <text>7-phospho-2-dehydro-3-deoxy-D-arabino-heptonate = 3-dehydroquinate + phosphate</text>
        <dbReference type="Rhea" id="RHEA:21968"/>
        <dbReference type="ChEBI" id="CHEBI:32364"/>
        <dbReference type="ChEBI" id="CHEBI:43474"/>
        <dbReference type="ChEBI" id="CHEBI:58394"/>
        <dbReference type="EC" id="4.2.3.4"/>
    </reaction>
</comment>
<comment type="cofactor">
    <cofactor evidence="1">
        <name>Co(2+)</name>
        <dbReference type="ChEBI" id="CHEBI:48828"/>
    </cofactor>
    <cofactor evidence="1">
        <name>Zn(2+)</name>
        <dbReference type="ChEBI" id="CHEBI:29105"/>
    </cofactor>
    <text evidence="1">Binds 1 divalent metal cation per subunit. Can use either Co(2+) or Zn(2+).</text>
</comment>
<comment type="cofactor">
    <cofactor evidence="1">
        <name>NAD(+)</name>
        <dbReference type="ChEBI" id="CHEBI:57540"/>
    </cofactor>
</comment>
<comment type="pathway">
    <text evidence="1">Metabolic intermediate biosynthesis; chorismate biosynthesis; chorismate from D-erythrose 4-phosphate and phosphoenolpyruvate: step 2/7.</text>
</comment>
<comment type="subcellular location">
    <subcellularLocation>
        <location evidence="1">Cytoplasm</location>
    </subcellularLocation>
</comment>
<comment type="similarity">
    <text evidence="1">Belongs to the sugar phosphate cyclases superfamily. Dehydroquinate synthase family.</text>
</comment>
<dbReference type="EC" id="4.2.3.4" evidence="1"/>
<dbReference type="EMBL" id="CP000918">
    <property type="protein sequence ID" value="ACO16722.1"/>
    <property type="molecule type" value="Genomic_DNA"/>
</dbReference>
<dbReference type="RefSeq" id="WP_000702169.1">
    <property type="nucleotide sequence ID" value="NC_012468.1"/>
</dbReference>
<dbReference type="SMR" id="C1C7X6"/>
<dbReference type="GeneID" id="45653365"/>
<dbReference type="KEGG" id="snm:SP70585_1414"/>
<dbReference type="HOGENOM" id="CLU_001201_0_2_9"/>
<dbReference type="UniPathway" id="UPA00053">
    <property type="reaction ID" value="UER00085"/>
</dbReference>
<dbReference type="Proteomes" id="UP000002211">
    <property type="component" value="Chromosome"/>
</dbReference>
<dbReference type="GO" id="GO:0005737">
    <property type="term" value="C:cytoplasm"/>
    <property type="evidence" value="ECO:0007669"/>
    <property type="project" value="UniProtKB-SubCell"/>
</dbReference>
<dbReference type="GO" id="GO:0003856">
    <property type="term" value="F:3-dehydroquinate synthase activity"/>
    <property type="evidence" value="ECO:0007669"/>
    <property type="project" value="UniProtKB-UniRule"/>
</dbReference>
<dbReference type="GO" id="GO:0046872">
    <property type="term" value="F:metal ion binding"/>
    <property type="evidence" value="ECO:0007669"/>
    <property type="project" value="UniProtKB-KW"/>
</dbReference>
<dbReference type="GO" id="GO:0000166">
    <property type="term" value="F:nucleotide binding"/>
    <property type="evidence" value="ECO:0007669"/>
    <property type="project" value="UniProtKB-KW"/>
</dbReference>
<dbReference type="GO" id="GO:0008652">
    <property type="term" value="P:amino acid biosynthetic process"/>
    <property type="evidence" value="ECO:0007669"/>
    <property type="project" value="UniProtKB-KW"/>
</dbReference>
<dbReference type="GO" id="GO:0009073">
    <property type="term" value="P:aromatic amino acid family biosynthetic process"/>
    <property type="evidence" value="ECO:0007669"/>
    <property type="project" value="UniProtKB-KW"/>
</dbReference>
<dbReference type="GO" id="GO:0009423">
    <property type="term" value="P:chorismate biosynthetic process"/>
    <property type="evidence" value="ECO:0007669"/>
    <property type="project" value="UniProtKB-UniRule"/>
</dbReference>
<dbReference type="CDD" id="cd08195">
    <property type="entry name" value="DHQS"/>
    <property type="match status" value="1"/>
</dbReference>
<dbReference type="FunFam" id="1.20.1090.10:FF:000012">
    <property type="entry name" value="3-dehydroquinate synthase"/>
    <property type="match status" value="1"/>
</dbReference>
<dbReference type="FunFam" id="3.40.50.1970:FF:000001">
    <property type="entry name" value="3-dehydroquinate synthase"/>
    <property type="match status" value="1"/>
</dbReference>
<dbReference type="Gene3D" id="3.40.50.1970">
    <property type="match status" value="1"/>
</dbReference>
<dbReference type="Gene3D" id="1.20.1090.10">
    <property type="entry name" value="Dehydroquinate synthase-like - alpha domain"/>
    <property type="match status" value="1"/>
</dbReference>
<dbReference type="HAMAP" id="MF_00110">
    <property type="entry name" value="DHQ_synthase"/>
    <property type="match status" value="1"/>
</dbReference>
<dbReference type="InterPro" id="IPR050071">
    <property type="entry name" value="Dehydroquinate_synthase"/>
</dbReference>
<dbReference type="InterPro" id="IPR016037">
    <property type="entry name" value="DHQ_synth_AroB"/>
</dbReference>
<dbReference type="InterPro" id="IPR030963">
    <property type="entry name" value="DHQ_synth_fam"/>
</dbReference>
<dbReference type="InterPro" id="IPR030960">
    <property type="entry name" value="DHQS/DOIS_N"/>
</dbReference>
<dbReference type="InterPro" id="IPR056179">
    <property type="entry name" value="DHQS_C"/>
</dbReference>
<dbReference type="NCBIfam" id="TIGR01357">
    <property type="entry name" value="aroB"/>
    <property type="match status" value="1"/>
</dbReference>
<dbReference type="PANTHER" id="PTHR43622">
    <property type="entry name" value="3-DEHYDROQUINATE SYNTHASE"/>
    <property type="match status" value="1"/>
</dbReference>
<dbReference type="PANTHER" id="PTHR43622:SF7">
    <property type="entry name" value="3-DEHYDROQUINATE SYNTHASE, CHLOROPLASTIC"/>
    <property type="match status" value="1"/>
</dbReference>
<dbReference type="Pfam" id="PF01761">
    <property type="entry name" value="DHQ_synthase"/>
    <property type="match status" value="1"/>
</dbReference>
<dbReference type="Pfam" id="PF24621">
    <property type="entry name" value="DHQS_C"/>
    <property type="match status" value="1"/>
</dbReference>
<dbReference type="PIRSF" id="PIRSF001455">
    <property type="entry name" value="DHQ_synth"/>
    <property type="match status" value="1"/>
</dbReference>
<dbReference type="SUPFAM" id="SSF56796">
    <property type="entry name" value="Dehydroquinate synthase-like"/>
    <property type="match status" value="1"/>
</dbReference>
<keyword id="KW-0028">Amino-acid biosynthesis</keyword>
<keyword id="KW-0057">Aromatic amino acid biosynthesis</keyword>
<keyword id="KW-0170">Cobalt</keyword>
<keyword id="KW-0963">Cytoplasm</keyword>
<keyword id="KW-0456">Lyase</keyword>
<keyword id="KW-0479">Metal-binding</keyword>
<keyword id="KW-0520">NAD</keyword>
<keyword id="KW-0547">Nucleotide-binding</keyword>
<keyword id="KW-0862">Zinc</keyword>
<protein>
    <recommendedName>
        <fullName evidence="1">3-dehydroquinate synthase</fullName>
        <shortName evidence="1">DHQS</shortName>
        <ecNumber evidence="1">4.2.3.4</ecNumber>
    </recommendedName>
</protein>
<evidence type="ECO:0000255" key="1">
    <source>
        <dbReference type="HAMAP-Rule" id="MF_00110"/>
    </source>
</evidence>
<name>AROB_STRP7</name>
<accession>C1C7X6</accession>
<proteinExistence type="inferred from homology"/>